<gene>
    <name type="primary">Oxr1</name>
    <name type="synonym">C7</name>
    <name type="synonym">Gm1238</name>
</gene>
<keyword id="KW-0025">Alternative splicing</keyword>
<keyword id="KW-0496">Mitochondrion</keyword>
<keyword id="KW-0539">Nucleus</keyword>
<keyword id="KW-0597">Phosphoprotein</keyword>
<keyword id="KW-1185">Reference proteome</keyword>
<feature type="chain" id="PRO_0000231646" description="Oxidation resistance protein 1">
    <location>
        <begin position="1"/>
        <end position="866"/>
    </location>
</feature>
<feature type="domain" description="LysM" evidence="3">
    <location>
        <begin position="98"/>
        <end position="141"/>
    </location>
</feature>
<feature type="domain" description="GRAM">
    <location>
        <begin position="213"/>
        <end position="268"/>
    </location>
</feature>
<feature type="domain" description="TLDc" evidence="4">
    <location>
        <begin position="705"/>
        <end position="866"/>
    </location>
</feature>
<feature type="region of interest" description="Disordered" evidence="5">
    <location>
        <begin position="1"/>
        <end position="92"/>
    </location>
</feature>
<feature type="region of interest" description="Disordered" evidence="5">
    <location>
        <begin position="150"/>
        <end position="202"/>
    </location>
</feature>
<feature type="region of interest" description="Disordered" evidence="5">
    <location>
        <begin position="293"/>
        <end position="540"/>
    </location>
</feature>
<feature type="region of interest" description="Mediates oxidative antimutator activity" evidence="1">
    <location>
        <begin position="543"/>
        <end position="570"/>
    </location>
</feature>
<feature type="region of interest" description="Disordered" evidence="5">
    <location>
        <begin position="682"/>
        <end position="703"/>
    </location>
</feature>
<feature type="compositionally biased region" description="Basic and acidic residues" evidence="5">
    <location>
        <begin position="63"/>
        <end position="88"/>
    </location>
</feature>
<feature type="compositionally biased region" description="Low complexity" evidence="5">
    <location>
        <begin position="150"/>
        <end position="168"/>
    </location>
</feature>
<feature type="compositionally biased region" description="Basic and acidic residues" evidence="5">
    <location>
        <begin position="170"/>
        <end position="184"/>
    </location>
</feature>
<feature type="compositionally biased region" description="Basic and acidic residues" evidence="5">
    <location>
        <begin position="347"/>
        <end position="363"/>
    </location>
</feature>
<feature type="compositionally biased region" description="Polar residues" evidence="5">
    <location>
        <begin position="364"/>
        <end position="399"/>
    </location>
</feature>
<feature type="compositionally biased region" description="Basic and acidic residues" evidence="5">
    <location>
        <begin position="433"/>
        <end position="447"/>
    </location>
</feature>
<feature type="compositionally biased region" description="Polar residues" evidence="5">
    <location>
        <begin position="448"/>
        <end position="465"/>
    </location>
</feature>
<feature type="compositionally biased region" description="Basic and acidic residues" evidence="5">
    <location>
        <begin position="483"/>
        <end position="497"/>
    </location>
</feature>
<feature type="compositionally biased region" description="Polar residues" evidence="5">
    <location>
        <begin position="502"/>
        <end position="519"/>
    </location>
</feature>
<feature type="modified residue" description="Phosphoserine" evidence="2">
    <location>
        <position position="90"/>
    </location>
</feature>
<feature type="modified residue" description="Phosphothreonine" evidence="10">
    <location>
        <position position="118"/>
    </location>
</feature>
<feature type="modified residue" description="Phosphoserine" evidence="10">
    <location>
        <position position="201"/>
    </location>
</feature>
<feature type="modified residue" description="Phosphoserine" evidence="2">
    <location>
        <position position="202"/>
    </location>
</feature>
<feature type="modified residue" description="Phosphoserine" evidence="10">
    <location>
        <position position="204"/>
    </location>
</feature>
<feature type="modified residue" description="Phosphoserine" evidence="10">
    <location>
        <position position="294"/>
    </location>
</feature>
<feature type="modified residue" description="Phosphoserine" evidence="10">
    <location>
        <position position="334"/>
    </location>
</feature>
<feature type="modified residue" description="Phosphoserine" evidence="10">
    <location>
        <position position="336"/>
    </location>
</feature>
<feature type="modified residue" description="Phosphothreonine" evidence="10">
    <location>
        <position position="341"/>
    </location>
</feature>
<feature type="modified residue" description="Phosphoserine" evidence="10">
    <location>
        <position position="346"/>
    </location>
</feature>
<feature type="modified residue" description="Phosphoserine" evidence="10">
    <location>
        <position position="488"/>
    </location>
</feature>
<feature type="splice variant" id="VSP_039015" description="In isoform 2 and isoform 3." evidence="7 8">
    <location>
        <begin position="1"/>
        <end position="88"/>
    </location>
</feature>
<feature type="splice variant" id="VSP_039016" description="In isoform 3 and isoform 4." evidence="7 8">
    <location>
        <begin position="646"/>
        <end position="672"/>
    </location>
</feature>
<feature type="sequence conflict" description="In Ref. 1; AAK29400." evidence="9" ref="1">
    <original>SLN</original>
    <variation>PLY</variation>
    <location>
        <begin position="107"/>
        <end position="109"/>
    </location>
</feature>
<feature type="sequence conflict" description="In Ref. 1; AAK29400." evidence="9" ref="1">
    <original>L</original>
    <variation>H</variation>
    <location>
        <position position="156"/>
    </location>
</feature>
<feature type="sequence conflict" description="In Ref. 3; AAH89183/AAH98491." evidence="9" ref="3">
    <original>S</original>
    <variation>A</variation>
    <location>
        <position position="308"/>
    </location>
</feature>
<feature type="sequence conflict" description="In Ref. 3; AAH89183/AAH98491." evidence="9" ref="3">
    <original>TEV</original>
    <variation>PEI</variation>
    <location>
        <begin position="435"/>
        <end position="437"/>
    </location>
</feature>
<feature type="sequence conflict" description="In Ref. 3; AAH89183/AAH98491." evidence="9" ref="3">
    <original>S</original>
    <variation>L</variation>
    <location>
        <position position="451"/>
    </location>
</feature>
<feature type="sequence conflict" description="In Ref. 3; AAH98491." evidence="9" ref="3">
    <original>D</original>
    <variation>G</variation>
    <location>
        <position position="814"/>
    </location>
</feature>
<proteinExistence type="evidence at protein level"/>
<comment type="function">
    <text>May be involved in protection from oxidative damage.</text>
</comment>
<comment type="subcellular location">
    <subcellularLocation>
        <location evidence="1">Mitochondrion</location>
    </subcellularLocation>
    <subcellularLocation>
        <location evidence="6">Nucleus</location>
        <location evidence="6">Nucleolus</location>
    </subcellularLocation>
    <text>According to PubMed:11237729 it is nucleolar.</text>
</comment>
<comment type="alternative products">
    <event type="alternative splicing"/>
    <isoform>
        <id>Q4KMM3-1</id>
        <name>1</name>
        <sequence type="displayed"/>
    </isoform>
    <isoform>
        <id>Q4KMM3-2</id>
        <name>2</name>
        <name>C7B</name>
        <sequence type="described" ref="VSP_039015"/>
    </isoform>
    <isoform>
        <id>Q4KMM3-3</id>
        <name>3</name>
        <name>C7A</name>
        <sequence type="described" ref="VSP_039015 VSP_039016"/>
    </isoform>
    <isoform>
        <id>Q4KMM3-4</id>
        <name>4</name>
        <sequence type="described" ref="VSP_039016"/>
    </isoform>
</comment>
<comment type="tissue specificity">
    <text evidence="6">Highly expressed in brain and testis.</text>
</comment>
<comment type="similarity">
    <text evidence="9">Belongs to the OXR1 family.</text>
</comment>
<comment type="sequence caution" evidence="9">
    <conflict type="erroneous initiation">
        <sequence resource="EMBL-CDS" id="AAH03927"/>
    </conflict>
    <text>Truncated N-terminus.</text>
</comment>
<comment type="sequence caution" evidence="9">
    <conflict type="erroneous initiation">
        <sequence resource="EMBL-CDS" id="AAH98491"/>
    </conflict>
    <text>Truncated N-terminus.</text>
</comment>
<comment type="sequence caution" evidence="9">
    <conflict type="erroneous initiation">
        <sequence resource="EMBL-CDS" id="BAE34619"/>
    </conflict>
    <text>Truncated N-terminus.</text>
</comment>
<sequence>MSVSNLSWLKKKSQSVDITAPGFNPLGGAGKQAPQASKPPAPKTPIIEEEQNNSANTQKHPSRKSELKRFYTIDTGQKKTLDKKDGRRMSFQKPKGTIEYTVESRDSLNSIALKFDTTPNELVQLNKLFSRAVVTGQVLYVPDPEYVSSVESSPSLSPVSPLSPTSSEAEFDKTTTPDVAHPKEAPPASTVSGIRPARVVSSTSEEEEAFTEKFLKINCKYITIGKGTVSGVLLVTPNNIMFDPHKTDPLVQENGCEEYGIMCPMEEVMSAAMYKEILDSKIKESLPIELDQLSGRGSCHSKKATGVSAEDADPRARDQGNDSASTAPRSTEESLSEDAFTESELSPIREELLSSEPRQEKSSDASSESVQTVSQMEVQSLTATSEAANVPDRTSSNPGALSHETGLSGLETATKGGDKATESLQEVSGPKEQSTEVKGQDNQDSSHQESSLQQEAGEDSVSSGETVELKEKPAVLKDQQGQELKRDSETEVEELRKLWKTHSMQQAKQQRDTIQQVSQRESKHSSAAADAHGEGSSLLKEKRRHRLHKFLCLRVGKPMRKTFVSQASATMQQYAQRDKKHEYWFAVPQERTDHLYAFFIQWSPEIYAEDSGEYTREPGFIVVKKMDESEANEAPAGEAAAREWEVVSVAEYHRRIDALNTEELRTLCRRLQITTREDINSKQVAPAKADLEPESFRPNLSDPSELLLPDQIEKLTKHLPPRTIGYPWTLVYGTGKHGTSLKTLYRTMTGLDTPVLMVIKDSDGQVFGALASEPFKVSDGFYGTGETFVFTFCPEFEVFKWTGDNMFFIKGDMDSLAFGGGGGEFALWLDGDLYHGRSHSCKTFGNHTLSKKEDFFIQDIEIWAFE</sequence>
<accession>Q4KMM3</accession>
<accession>Q5FWW1</accession>
<accession>Q99L06</accession>
<accession>Q99MK1</accession>
<accession>Q99MP4</accession>
<dbReference type="EMBL" id="AF324899">
    <property type="protein sequence ID" value="AAK30368.1"/>
    <property type="molecule type" value="mRNA"/>
</dbReference>
<dbReference type="EMBL" id="AF333985">
    <property type="protein sequence ID" value="AAK29400.1"/>
    <property type="molecule type" value="mRNA"/>
</dbReference>
<dbReference type="EMBL" id="AK158703">
    <property type="protein sequence ID" value="BAE34619.1"/>
    <property type="status" value="ALT_INIT"/>
    <property type="molecule type" value="mRNA"/>
</dbReference>
<dbReference type="EMBL" id="BC003927">
    <property type="protein sequence ID" value="AAH03927.1"/>
    <property type="status" value="ALT_INIT"/>
    <property type="molecule type" value="mRNA"/>
</dbReference>
<dbReference type="EMBL" id="BC089183">
    <property type="protein sequence ID" value="AAH89183.1"/>
    <property type="molecule type" value="mRNA"/>
</dbReference>
<dbReference type="EMBL" id="BC098491">
    <property type="protein sequence ID" value="AAH98491.1"/>
    <property type="status" value="ALT_INIT"/>
    <property type="molecule type" value="mRNA"/>
</dbReference>
<dbReference type="CCDS" id="CCDS27448.1">
    <molecule id="Q4KMM3-2"/>
</dbReference>
<dbReference type="CCDS" id="CCDS49598.1">
    <molecule id="Q4KMM3-1"/>
</dbReference>
<dbReference type="CCDS" id="CCDS49600.1">
    <molecule id="Q4KMM3-3"/>
</dbReference>
<dbReference type="CCDS" id="CCDS88760.1">
    <molecule id="Q4KMM3-4"/>
</dbReference>
<dbReference type="RefSeq" id="NP_001123635.1">
    <molecule id="Q4KMM3-3"/>
    <property type="nucleotide sequence ID" value="NM_001130163.1"/>
</dbReference>
<dbReference type="RefSeq" id="NP_001123636.1">
    <property type="nucleotide sequence ID" value="NM_001130164.1"/>
</dbReference>
<dbReference type="RefSeq" id="NP_001123637.1">
    <property type="nucleotide sequence ID" value="NM_001130165.1"/>
</dbReference>
<dbReference type="RefSeq" id="NP_001123638.1">
    <molecule id="Q4KMM3-1"/>
    <property type="nucleotide sequence ID" value="NM_001130166.1"/>
</dbReference>
<dbReference type="RefSeq" id="NP_001345906.1">
    <molecule id="Q4KMM3-1"/>
    <property type="nucleotide sequence ID" value="NM_001358977.1"/>
</dbReference>
<dbReference type="RefSeq" id="NP_001345907.1">
    <molecule id="Q4KMM3-4"/>
    <property type="nucleotide sequence ID" value="NM_001358978.1"/>
</dbReference>
<dbReference type="RefSeq" id="NP_570955.1">
    <molecule id="Q4KMM3-2"/>
    <property type="nucleotide sequence ID" value="NM_130885.2"/>
</dbReference>
<dbReference type="RefSeq" id="XP_017171979.1">
    <property type="nucleotide sequence ID" value="XM_017316490.1"/>
</dbReference>
<dbReference type="RefSeq" id="XP_017171980.1">
    <property type="nucleotide sequence ID" value="XM_017316491.1"/>
</dbReference>
<dbReference type="SMR" id="Q4KMM3"/>
<dbReference type="BioGRID" id="228391">
    <property type="interactions" value="5"/>
</dbReference>
<dbReference type="FunCoup" id="Q4KMM3">
    <property type="interactions" value="4684"/>
</dbReference>
<dbReference type="IntAct" id="Q4KMM3">
    <property type="interactions" value="1"/>
</dbReference>
<dbReference type="STRING" id="10090.ENSMUSP00000105926"/>
<dbReference type="GlyGen" id="Q4KMM3">
    <property type="glycosylation" value="6 sites, 2 N-linked glycans (2 sites), 1 O-linked glycan (4 sites)"/>
</dbReference>
<dbReference type="iPTMnet" id="Q4KMM3"/>
<dbReference type="MetOSite" id="Q4KMM3"/>
<dbReference type="PhosphoSitePlus" id="Q4KMM3"/>
<dbReference type="SwissPalm" id="Q4KMM3"/>
<dbReference type="jPOST" id="Q4KMM3"/>
<dbReference type="PaxDb" id="10090-ENSMUSP00000105926"/>
<dbReference type="PeptideAtlas" id="Q4KMM3"/>
<dbReference type="ProteomicsDB" id="295497">
    <molecule id="Q4KMM3-1"/>
</dbReference>
<dbReference type="ProteomicsDB" id="295498">
    <molecule id="Q4KMM3-2"/>
</dbReference>
<dbReference type="ProteomicsDB" id="295499">
    <molecule id="Q4KMM3-3"/>
</dbReference>
<dbReference type="ProteomicsDB" id="295500">
    <molecule id="Q4KMM3-4"/>
</dbReference>
<dbReference type="Pumba" id="Q4KMM3"/>
<dbReference type="Antibodypedia" id="26472">
    <property type="antibodies" value="200 antibodies from 28 providers"/>
</dbReference>
<dbReference type="DNASU" id="170719"/>
<dbReference type="Ensembl" id="ENSMUST00000022918.15">
    <molecule id="Q4KMM3-2"/>
    <property type="protein sequence ID" value="ENSMUSP00000022918.8"/>
    <property type="gene ID" value="ENSMUSG00000022307.17"/>
</dbReference>
<dbReference type="Ensembl" id="ENSMUST00000090095.13">
    <molecule id="Q4KMM3-3"/>
    <property type="protein sequence ID" value="ENSMUSP00000087553.6"/>
    <property type="gene ID" value="ENSMUSG00000022307.17"/>
</dbReference>
<dbReference type="Ensembl" id="ENSMUST00000090096.11">
    <molecule id="Q4KMM3-3"/>
    <property type="protein sequence ID" value="ENSMUSP00000087554.5"/>
    <property type="gene ID" value="ENSMUSG00000022307.17"/>
</dbReference>
<dbReference type="Ensembl" id="ENSMUST00000110297.10">
    <molecule id="Q4KMM3-1"/>
    <property type="protein sequence ID" value="ENSMUSP00000105926.3"/>
    <property type="gene ID" value="ENSMUSG00000022307.17"/>
</dbReference>
<dbReference type="Ensembl" id="ENSMUST00000179393.8">
    <molecule id="Q4KMM3-3"/>
    <property type="protein sequence ID" value="ENSMUSP00000136923.2"/>
    <property type="gene ID" value="ENSMUSG00000022307.17"/>
</dbReference>
<dbReference type="Ensembl" id="ENSMUST00000230203.2">
    <molecule id="Q4KMM3-4"/>
    <property type="protein sequence ID" value="ENSMUSP00000155237.2"/>
    <property type="gene ID" value="ENSMUSG00000022307.17"/>
</dbReference>
<dbReference type="GeneID" id="170719"/>
<dbReference type="KEGG" id="mmu:170719"/>
<dbReference type="UCSC" id="uc007vot.2">
    <molecule id="Q4KMM3-1"/>
    <property type="organism name" value="mouse"/>
</dbReference>
<dbReference type="UCSC" id="uc007vpa.1">
    <molecule id="Q4KMM3-3"/>
    <property type="organism name" value="mouse"/>
</dbReference>
<dbReference type="AGR" id="MGI:2179326"/>
<dbReference type="CTD" id="55074"/>
<dbReference type="MGI" id="MGI:2179326">
    <property type="gene designation" value="Oxr1"/>
</dbReference>
<dbReference type="VEuPathDB" id="HostDB:ENSMUSG00000022307"/>
<dbReference type="eggNOG" id="KOG2372">
    <property type="taxonomic scope" value="Eukaryota"/>
</dbReference>
<dbReference type="GeneTree" id="ENSGT00940000155187"/>
<dbReference type="HOGENOM" id="CLU_007095_2_0_1"/>
<dbReference type="InParanoid" id="Q4KMM3"/>
<dbReference type="OMA" id="THIEGVC"/>
<dbReference type="OrthoDB" id="26679at2759"/>
<dbReference type="PhylomeDB" id="Q4KMM3"/>
<dbReference type="TreeFam" id="TF313530"/>
<dbReference type="BioGRID-ORCS" id="170719">
    <property type="hits" value="4 hits in 74 CRISPR screens"/>
</dbReference>
<dbReference type="ChiTaRS" id="Oxr1">
    <property type="organism name" value="mouse"/>
</dbReference>
<dbReference type="PRO" id="PR:Q4KMM3"/>
<dbReference type="Proteomes" id="UP000000589">
    <property type="component" value="Chromosome 15"/>
</dbReference>
<dbReference type="RNAct" id="Q4KMM3">
    <property type="molecule type" value="protein"/>
</dbReference>
<dbReference type="Bgee" id="ENSMUSG00000022307">
    <property type="expression patterns" value="Expressed in medial dorsal nucleus of thalamus and 250 other cell types or tissues"/>
</dbReference>
<dbReference type="ExpressionAtlas" id="Q4KMM3">
    <property type="expression patterns" value="baseline and differential"/>
</dbReference>
<dbReference type="GO" id="GO:0005739">
    <property type="term" value="C:mitochondrion"/>
    <property type="evidence" value="ECO:0007005"/>
    <property type="project" value="MGI"/>
</dbReference>
<dbReference type="GO" id="GO:0005730">
    <property type="term" value="C:nucleolus"/>
    <property type="evidence" value="ECO:0000314"/>
    <property type="project" value="MGI"/>
</dbReference>
<dbReference type="GO" id="GO:0016491">
    <property type="term" value="F:oxidoreductase activity"/>
    <property type="evidence" value="ECO:0000314"/>
    <property type="project" value="MGI"/>
</dbReference>
<dbReference type="GO" id="GO:0007628">
    <property type="term" value="P:adult walking behavior"/>
    <property type="evidence" value="ECO:0000315"/>
    <property type="project" value="MGI"/>
</dbReference>
<dbReference type="GO" id="GO:0071447">
    <property type="term" value="P:cellular response to hydroperoxide"/>
    <property type="evidence" value="ECO:0000315"/>
    <property type="project" value="MGI"/>
</dbReference>
<dbReference type="GO" id="GO:1900408">
    <property type="term" value="P:negative regulation of cellular response to oxidative stress"/>
    <property type="evidence" value="ECO:0000314"/>
    <property type="project" value="MGI"/>
</dbReference>
<dbReference type="GO" id="GO:0043524">
    <property type="term" value="P:negative regulation of neuron apoptotic process"/>
    <property type="evidence" value="ECO:0000315"/>
    <property type="project" value="MGI"/>
</dbReference>
<dbReference type="GO" id="GO:0051402">
    <property type="term" value="P:neuron apoptotic process"/>
    <property type="evidence" value="ECO:0000315"/>
    <property type="project" value="MGI"/>
</dbReference>
<dbReference type="CDD" id="cd00118">
    <property type="entry name" value="LysM"/>
    <property type="match status" value="1"/>
</dbReference>
<dbReference type="FunFam" id="3.10.350.10:FF:000002">
    <property type="entry name" value="Oxidation resistance protein 1 isoform X1"/>
    <property type="match status" value="1"/>
</dbReference>
<dbReference type="Gene3D" id="3.10.350.10">
    <property type="entry name" value="LysM domain"/>
    <property type="match status" value="1"/>
</dbReference>
<dbReference type="InterPro" id="IPR018392">
    <property type="entry name" value="LysM_dom"/>
</dbReference>
<dbReference type="InterPro" id="IPR036779">
    <property type="entry name" value="LysM_dom_sf"/>
</dbReference>
<dbReference type="InterPro" id="IPR006571">
    <property type="entry name" value="TLDc_dom"/>
</dbReference>
<dbReference type="PANTHER" id="PTHR23354">
    <property type="entry name" value="NUCLEOLAR PROTEIN 7/ESTROGEN RECEPTOR COACTIVATOR-RELATED"/>
    <property type="match status" value="1"/>
</dbReference>
<dbReference type="PANTHER" id="PTHR23354:SF69">
    <property type="entry name" value="OXIDATION RESISTANCE PROTEIN 1"/>
    <property type="match status" value="1"/>
</dbReference>
<dbReference type="Pfam" id="PF01476">
    <property type="entry name" value="LysM"/>
    <property type="match status" value="1"/>
</dbReference>
<dbReference type="Pfam" id="PF07534">
    <property type="entry name" value="TLD"/>
    <property type="match status" value="1"/>
</dbReference>
<dbReference type="SMART" id="SM00257">
    <property type="entry name" value="LysM"/>
    <property type="match status" value="1"/>
</dbReference>
<dbReference type="SMART" id="SM00584">
    <property type="entry name" value="TLDc"/>
    <property type="match status" value="1"/>
</dbReference>
<dbReference type="SUPFAM" id="SSF54106">
    <property type="entry name" value="LysM domain"/>
    <property type="match status" value="1"/>
</dbReference>
<dbReference type="PROSITE" id="PS51782">
    <property type="entry name" value="LYSM"/>
    <property type="match status" value="1"/>
</dbReference>
<dbReference type="PROSITE" id="PS51886">
    <property type="entry name" value="TLDC"/>
    <property type="match status" value="1"/>
</dbReference>
<protein>
    <recommendedName>
        <fullName>Oxidation resistance protein 1</fullName>
    </recommendedName>
    <alternativeName>
        <fullName>Protein C7</fullName>
    </alternativeName>
</protein>
<evidence type="ECO:0000250" key="1"/>
<evidence type="ECO:0000250" key="2">
    <source>
        <dbReference type="UniProtKB" id="Q8N573"/>
    </source>
</evidence>
<evidence type="ECO:0000255" key="3">
    <source>
        <dbReference type="PROSITE-ProRule" id="PRU01118"/>
    </source>
</evidence>
<evidence type="ECO:0000255" key="4">
    <source>
        <dbReference type="PROSITE-ProRule" id="PRU01234"/>
    </source>
</evidence>
<evidence type="ECO:0000256" key="5">
    <source>
        <dbReference type="SAM" id="MobiDB-lite"/>
    </source>
</evidence>
<evidence type="ECO:0000269" key="6">
    <source>
    </source>
</evidence>
<evidence type="ECO:0000303" key="7">
    <source>
    </source>
</evidence>
<evidence type="ECO:0000303" key="8">
    <source>
    </source>
</evidence>
<evidence type="ECO:0000305" key="9"/>
<evidence type="ECO:0007744" key="10">
    <source>
    </source>
</evidence>
<reference key="1">
    <citation type="journal article" date="2001" name="Biochem. Biophys. Res. Commun.">
        <title>C7, a novel nucleolar protein, is the mouse homologue of the Drosophila late puff product L82 and an isoform of human OXR1.</title>
        <authorList>
            <person name="Fischer H."/>
            <person name="Zhang X.U."/>
            <person name="O'Brien K.P."/>
            <person name="Kylsten P."/>
            <person name="Engvall E."/>
        </authorList>
    </citation>
    <scope>NUCLEOTIDE SEQUENCE [MRNA] (ISOFORMS 2 AND 3)</scope>
    <scope>SUBCELLULAR LOCATION</scope>
    <scope>TISSUE SPECIFICITY</scope>
</reference>
<reference key="2">
    <citation type="journal article" date="2005" name="Science">
        <title>The transcriptional landscape of the mammalian genome.</title>
        <authorList>
            <person name="Carninci P."/>
            <person name="Kasukawa T."/>
            <person name="Katayama S."/>
            <person name="Gough J."/>
            <person name="Frith M.C."/>
            <person name="Maeda N."/>
            <person name="Oyama R."/>
            <person name="Ravasi T."/>
            <person name="Lenhard B."/>
            <person name="Wells C."/>
            <person name="Kodzius R."/>
            <person name="Shimokawa K."/>
            <person name="Bajic V.B."/>
            <person name="Brenner S.E."/>
            <person name="Batalov S."/>
            <person name="Forrest A.R."/>
            <person name="Zavolan M."/>
            <person name="Davis M.J."/>
            <person name="Wilming L.G."/>
            <person name="Aidinis V."/>
            <person name="Allen J.E."/>
            <person name="Ambesi-Impiombato A."/>
            <person name="Apweiler R."/>
            <person name="Aturaliya R.N."/>
            <person name="Bailey T.L."/>
            <person name="Bansal M."/>
            <person name="Baxter L."/>
            <person name="Beisel K.W."/>
            <person name="Bersano T."/>
            <person name="Bono H."/>
            <person name="Chalk A.M."/>
            <person name="Chiu K.P."/>
            <person name="Choudhary V."/>
            <person name="Christoffels A."/>
            <person name="Clutterbuck D.R."/>
            <person name="Crowe M.L."/>
            <person name="Dalla E."/>
            <person name="Dalrymple B.P."/>
            <person name="de Bono B."/>
            <person name="Della Gatta G."/>
            <person name="di Bernardo D."/>
            <person name="Down T."/>
            <person name="Engstrom P."/>
            <person name="Fagiolini M."/>
            <person name="Faulkner G."/>
            <person name="Fletcher C.F."/>
            <person name="Fukushima T."/>
            <person name="Furuno M."/>
            <person name="Futaki S."/>
            <person name="Gariboldi M."/>
            <person name="Georgii-Hemming P."/>
            <person name="Gingeras T.R."/>
            <person name="Gojobori T."/>
            <person name="Green R.E."/>
            <person name="Gustincich S."/>
            <person name="Harbers M."/>
            <person name="Hayashi Y."/>
            <person name="Hensch T.K."/>
            <person name="Hirokawa N."/>
            <person name="Hill D."/>
            <person name="Huminiecki L."/>
            <person name="Iacono M."/>
            <person name="Ikeo K."/>
            <person name="Iwama A."/>
            <person name="Ishikawa T."/>
            <person name="Jakt M."/>
            <person name="Kanapin A."/>
            <person name="Katoh M."/>
            <person name="Kawasawa Y."/>
            <person name="Kelso J."/>
            <person name="Kitamura H."/>
            <person name="Kitano H."/>
            <person name="Kollias G."/>
            <person name="Krishnan S.P."/>
            <person name="Kruger A."/>
            <person name="Kummerfeld S.K."/>
            <person name="Kurochkin I.V."/>
            <person name="Lareau L.F."/>
            <person name="Lazarevic D."/>
            <person name="Lipovich L."/>
            <person name="Liu J."/>
            <person name="Liuni S."/>
            <person name="McWilliam S."/>
            <person name="Madan Babu M."/>
            <person name="Madera M."/>
            <person name="Marchionni L."/>
            <person name="Matsuda H."/>
            <person name="Matsuzawa S."/>
            <person name="Miki H."/>
            <person name="Mignone F."/>
            <person name="Miyake S."/>
            <person name="Morris K."/>
            <person name="Mottagui-Tabar S."/>
            <person name="Mulder N."/>
            <person name="Nakano N."/>
            <person name="Nakauchi H."/>
            <person name="Ng P."/>
            <person name="Nilsson R."/>
            <person name="Nishiguchi S."/>
            <person name="Nishikawa S."/>
            <person name="Nori F."/>
            <person name="Ohara O."/>
            <person name="Okazaki Y."/>
            <person name="Orlando V."/>
            <person name="Pang K.C."/>
            <person name="Pavan W.J."/>
            <person name="Pavesi G."/>
            <person name="Pesole G."/>
            <person name="Petrovsky N."/>
            <person name="Piazza S."/>
            <person name="Reed J."/>
            <person name="Reid J.F."/>
            <person name="Ring B.Z."/>
            <person name="Ringwald M."/>
            <person name="Rost B."/>
            <person name="Ruan Y."/>
            <person name="Salzberg S.L."/>
            <person name="Sandelin A."/>
            <person name="Schneider C."/>
            <person name="Schoenbach C."/>
            <person name="Sekiguchi K."/>
            <person name="Semple C.A."/>
            <person name="Seno S."/>
            <person name="Sessa L."/>
            <person name="Sheng Y."/>
            <person name="Shibata Y."/>
            <person name="Shimada H."/>
            <person name="Shimada K."/>
            <person name="Silva D."/>
            <person name="Sinclair B."/>
            <person name="Sperling S."/>
            <person name="Stupka E."/>
            <person name="Sugiura K."/>
            <person name="Sultana R."/>
            <person name="Takenaka Y."/>
            <person name="Taki K."/>
            <person name="Tammoja K."/>
            <person name="Tan S.L."/>
            <person name="Tang S."/>
            <person name="Taylor M.S."/>
            <person name="Tegner J."/>
            <person name="Teichmann S.A."/>
            <person name="Ueda H.R."/>
            <person name="van Nimwegen E."/>
            <person name="Verardo R."/>
            <person name="Wei C.L."/>
            <person name="Yagi K."/>
            <person name="Yamanishi H."/>
            <person name="Zabarovsky E."/>
            <person name="Zhu S."/>
            <person name="Zimmer A."/>
            <person name="Hide W."/>
            <person name="Bult C."/>
            <person name="Grimmond S.M."/>
            <person name="Teasdale R.D."/>
            <person name="Liu E.T."/>
            <person name="Brusic V."/>
            <person name="Quackenbush J."/>
            <person name="Wahlestedt C."/>
            <person name="Mattick J.S."/>
            <person name="Hume D.A."/>
            <person name="Kai C."/>
            <person name="Sasaki D."/>
            <person name="Tomaru Y."/>
            <person name="Fukuda S."/>
            <person name="Kanamori-Katayama M."/>
            <person name="Suzuki M."/>
            <person name="Aoki J."/>
            <person name="Arakawa T."/>
            <person name="Iida J."/>
            <person name="Imamura K."/>
            <person name="Itoh M."/>
            <person name="Kato T."/>
            <person name="Kawaji H."/>
            <person name="Kawagashira N."/>
            <person name="Kawashima T."/>
            <person name="Kojima M."/>
            <person name="Kondo S."/>
            <person name="Konno H."/>
            <person name="Nakano K."/>
            <person name="Ninomiya N."/>
            <person name="Nishio T."/>
            <person name="Okada M."/>
            <person name="Plessy C."/>
            <person name="Shibata K."/>
            <person name="Shiraki T."/>
            <person name="Suzuki S."/>
            <person name="Tagami M."/>
            <person name="Waki K."/>
            <person name="Watahiki A."/>
            <person name="Okamura-Oho Y."/>
            <person name="Suzuki H."/>
            <person name="Kawai J."/>
            <person name="Hayashizaki Y."/>
        </authorList>
    </citation>
    <scope>NUCLEOTIDE SEQUENCE [LARGE SCALE MRNA] (ISOFORM 1)</scope>
    <source>
        <strain>C57BL/6J</strain>
        <tissue>Kidney</tissue>
    </source>
</reference>
<reference key="3">
    <citation type="journal article" date="2004" name="Genome Res.">
        <title>The status, quality, and expansion of the NIH full-length cDNA project: the Mammalian Gene Collection (MGC).</title>
        <authorList>
            <consortium name="The MGC Project Team"/>
        </authorList>
    </citation>
    <scope>NUCLEOTIDE SEQUENCE [LARGE SCALE MRNA] (ISOFORMS 3 AND 4)</scope>
    <source>
        <strain>CD-1</strain>
        <tissue>Mammary gland</tissue>
        <tissue>Neural stem cell</tissue>
    </source>
</reference>
<reference key="4">
    <citation type="journal article" date="2010" name="Cell">
        <title>A tissue-specific atlas of mouse protein phosphorylation and expression.</title>
        <authorList>
            <person name="Huttlin E.L."/>
            <person name="Jedrychowski M.P."/>
            <person name="Elias J.E."/>
            <person name="Goswami T."/>
            <person name="Rad R."/>
            <person name="Beausoleil S.A."/>
            <person name="Villen J."/>
            <person name="Haas W."/>
            <person name="Sowa M.E."/>
            <person name="Gygi S.P."/>
        </authorList>
    </citation>
    <scope>PHOSPHORYLATION [LARGE SCALE ANALYSIS] AT THR-118; SER-201; SER-204; SER-294; SER-334; SER-336; THR-341; SER-346 AND SER-488</scope>
    <scope>IDENTIFICATION BY MASS SPECTROMETRY [LARGE SCALE ANALYSIS]</scope>
    <source>
        <tissue>Brain</tissue>
        <tissue>Brown adipose tissue</tissue>
        <tissue>Heart</tissue>
        <tissue>Kidney</tissue>
        <tissue>Liver</tissue>
        <tissue>Lung</tissue>
        <tissue>Pancreas</tissue>
        <tissue>Spleen</tissue>
        <tissue>Testis</tissue>
    </source>
</reference>
<name>OXR1_MOUSE</name>
<organism>
    <name type="scientific">Mus musculus</name>
    <name type="common">Mouse</name>
    <dbReference type="NCBI Taxonomy" id="10090"/>
    <lineage>
        <taxon>Eukaryota</taxon>
        <taxon>Metazoa</taxon>
        <taxon>Chordata</taxon>
        <taxon>Craniata</taxon>
        <taxon>Vertebrata</taxon>
        <taxon>Euteleostomi</taxon>
        <taxon>Mammalia</taxon>
        <taxon>Eutheria</taxon>
        <taxon>Euarchontoglires</taxon>
        <taxon>Glires</taxon>
        <taxon>Rodentia</taxon>
        <taxon>Myomorpha</taxon>
        <taxon>Muroidea</taxon>
        <taxon>Muridae</taxon>
        <taxon>Murinae</taxon>
        <taxon>Mus</taxon>
        <taxon>Mus</taxon>
    </lineage>
</organism>